<reference key="1">
    <citation type="journal article" date="2003" name="Nat. Genet.">
        <title>Comparative analysis of the genome sequences of Bordetella pertussis, Bordetella parapertussis and Bordetella bronchiseptica.</title>
        <authorList>
            <person name="Parkhill J."/>
            <person name="Sebaihia M."/>
            <person name="Preston A."/>
            <person name="Murphy L.D."/>
            <person name="Thomson N.R."/>
            <person name="Harris D.E."/>
            <person name="Holden M.T.G."/>
            <person name="Churcher C.M."/>
            <person name="Bentley S.D."/>
            <person name="Mungall K.L."/>
            <person name="Cerdeno-Tarraga A.-M."/>
            <person name="Temple L."/>
            <person name="James K.D."/>
            <person name="Harris B."/>
            <person name="Quail M.A."/>
            <person name="Achtman M."/>
            <person name="Atkin R."/>
            <person name="Baker S."/>
            <person name="Basham D."/>
            <person name="Bason N."/>
            <person name="Cherevach I."/>
            <person name="Chillingworth T."/>
            <person name="Collins M."/>
            <person name="Cronin A."/>
            <person name="Davis P."/>
            <person name="Doggett J."/>
            <person name="Feltwell T."/>
            <person name="Goble A."/>
            <person name="Hamlin N."/>
            <person name="Hauser H."/>
            <person name="Holroyd S."/>
            <person name="Jagels K."/>
            <person name="Leather S."/>
            <person name="Moule S."/>
            <person name="Norberczak H."/>
            <person name="O'Neil S."/>
            <person name="Ormond D."/>
            <person name="Price C."/>
            <person name="Rabbinowitsch E."/>
            <person name="Rutter S."/>
            <person name="Sanders M."/>
            <person name="Saunders D."/>
            <person name="Seeger K."/>
            <person name="Sharp S."/>
            <person name="Simmonds M."/>
            <person name="Skelton J."/>
            <person name="Squares R."/>
            <person name="Squares S."/>
            <person name="Stevens K."/>
            <person name="Unwin L."/>
            <person name="Whitehead S."/>
            <person name="Barrell B.G."/>
            <person name="Maskell D.J."/>
        </authorList>
    </citation>
    <scope>NUCLEOTIDE SEQUENCE [LARGE SCALE GENOMIC DNA]</scope>
    <source>
        <strain>ATCC BAA-588 / NCTC 13252 / RB50</strain>
    </source>
</reference>
<reference key="2">
    <citation type="journal article" date="1987" name="J. Bacteriol.">
        <title>Bordetella parapertussis and Bordetella bronchiseptica contain transcriptionally silent pertussis toxin genes.</title>
        <authorList>
            <person name="Arico B."/>
            <person name="Rappuoli R."/>
        </authorList>
    </citation>
    <scope>TRANSCRIPTIONAL SILENCING</scope>
    <source>
        <strain>ATCC 4617 / NCIB 9935 / NCTC 8344 / NRRL B-140</strain>
    </source>
</reference>
<reference key="3">
    <citation type="journal article" date="1996" name="Infect. Immun.">
        <title>Analysis of proteins encoded by the ptx and ptl genes of Bordetella bronchiseptica and Bordetella parapertussis.</title>
        <authorList>
            <person name="Hausman S.Z."/>
            <person name="Cherry J.D."/>
            <person name="Heininger U."/>
            <person name="Wirsing von Koenig C.H."/>
            <person name="Burns D.L."/>
        </authorList>
    </citation>
    <scope>POSSIBLE EXPRESSION OF PTL AND PTX PROTEINS UNDER CONDITIONS DIFFERENT FROM B.PERTUSSIS EXPRESSION CONDITIONS</scope>
    <source>
        <strain>ATCC 31437 / Bb55</strain>
    </source>
</reference>
<feature type="chain" id="PRO_0000287409" description="Type IV secretion system protein PtlC homolog">
    <location>
        <begin position="1"/>
        <end position="824"/>
    </location>
</feature>
<feature type="binding site" evidence="2">
    <location>
        <begin position="456"/>
        <end position="463"/>
    </location>
    <ligand>
        <name>ATP</name>
        <dbReference type="ChEBI" id="CHEBI:30616"/>
    </ligand>
</feature>
<accession>Q7WDU1</accession>
<gene>
    <name type="primary">ptlC</name>
    <name type="ordered locus">BB4897</name>
</gene>
<organism>
    <name type="scientific">Bordetella bronchiseptica (strain ATCC BAA-588 / NCTC 13252 / RB50)</name>
    <name type="common">Alcaligenes bronchisepticus</name>
    <dbReference type="NCBI Taxonomy" id="257310"/>
    <lineage>
        <taxon>Bacteria</taxon>
        <taxon>Pseudomonadati</taxon>
        <taxon>Pseudomonadota</taxon>
        <taxon>Betaproteobacteria</taxon>
        <taxon>Burkholderiales</taxon>
        <taxon>Alcaligenaceae</taxon>
        <taxon>Bordetella</taxon>
    </lineage>
</organism>
<comment type="subcellular location">
    <subcellularLocation>
        <location evidence="1">Cell membrane</location>
    </subcellularLocation>
</comment>
<comment type="similarity">
    <text evidence="3">Belongs to the TrbE/VirB4 family.</text>
</comment>
<comment type="caution">
    <text evidence="3">B.parapertussis and B.bronchiseptica seem not to produce the pertussis toxin (S1, S2, S4, S5 and S3) and ptl proteins (PtlA, PtlB, PtlC, PtlD, PtlE, PtlF, PtlG, PtlH and PtlI) in vivo due to changes in the promoter region of the ptx-ptl operon. However, it is possible that their promoter is active under certain, as-yet-undefined conditions and that B.parapertussis and B.bronchiseptica are therefore capable of producing these proteins.</text>
</comment>
<keyword id="KW-0067">ATP-binding</keyword>
<keyword id="KW-1003">Cell membrane</keyword>
<keyword id="KW-0472">Membrane</keyword>
<keyword id="KW-0547">Nucleotide-binding</keyword>
<evidence type="ECO:0000250" key="1"/>
<evidence type="ECO:0000255" key="2"/>
<evidence type="ECO:0000305" key="3"/>
<dbReference type="EMBL" id="BX640451">
    <property type="protein sequence ID" value="CAE35260.1"/>
    <property type="molecule type" value="Genomic_DNA"/>
</dbReference>
<dbReference type="RefSeq" id="WP_003815859.1">
    <property type="nucleotide sequence ID" value="NC_002927.3"/>
</dbReference>
<dbReference type="SMR" id="Q7WDU1"/>
<dbReference type="GeneID" id="56476604"/>
<dbReference type="KEGG" id="bbr:BB4897"/>
<dbReference type="eggNOG" id="COG3451">
    <property type="taxonomic scope" value="Bacteria"/>
</dbReference>
<dbReference type="HOGENOM" id="CLU_008341_3_0_4"/>
<dbReference type="Proteomes" id="UP000001027">
    <property type="component" value="Chromosome"/>
</dbReference>
<dbReference type="GO" id="GO:0005886">
    <property type="term" value="C:plasma membrane"/>
    <property type="evidence" value="ECO:0007669"/>
    <property type="project" value="UniProtKB-SubCell"/>
</dbReference>
<dbReference type="GO" id="GO:0005524">
    <property type="term" value="F:ATP binding"/>
    <property type="evidence" value="ECO:0007669"/>
    <property type="project" value="UniProtKB-KW"/>
</dbReference>
<dbReference type="Gene3D" id="3.40.50.300">
    <property type="entry name" value="P-loop containing nucleotide triphosphate hydrolases"/>
    <property type="match status" value="2"/>
</dbReference>
<dbReference type="InterPro" id="IPR004346">
    <property type="entry name" value="CagE_TrbE_VirB"/>
</dbReference>
<dbReference type="InterPro" id="IPR018145">
    <property type="entry name" value="CagE_TrbE_VirB_cntrl_dom"/>
</dbReference>
<dbReference type="InterPro" id="IPR027417">
    <property type="entry name" value="P-loop_NTPase"/>
</dbReference>
<dbReference type="InterPro" id="IPR051162">
    <property type="entry name" value="T4SS_component"/>
</dbReference>
<dbReference type="NCBIfam" id="TIGR00929">
    <property type="entry name" value="VirB4_CagE"/>
    <property type="match status" value="1"/>
</dbReference>
<dbReference type="PANTHER" id="PTHR30121:SF12">
    <property type="entry name" value="TYPE IV SECRETION SYSTEM PROTEIN CAGE"/>
    <property type="match status" value="1"/>
</dbReference>
<dbReference type="PANTHER" id="PTHR30121">
    <property type="entry name" value="UNCHARACTERIZED PROTEIN YJGR-RELATED"/>
    <property type="match status" value="1"/>
</dbReference>
<dbReference type="Pfam" id="PF03135">
    <property type="entry name" value="CagE_TrbE_VirB"/>
    <property type="match status" value="1"/>
</dbReference>
<dbReference type="SUPFAM" id="SSF52540">
    <property type="entry name" value="P-loop containing nucleoside triphosphate hydrolases"/>
    <property type="match status" value="1"/>
</dbReference>
<sequence length="824" mass="92679">MNRRGGQTAFAAIARNERAIAAFIPYSSHLTDTTLITHGADLVRTWRVQGIAFESAEPELVSQRHEQLNGLWRAISCEQVALWIHCIRRKTQAGLDARYENPFCRALDASYNARLNARQAMTNEFYLTLVYRPGHAALGKRAHHGQAEVRRQLLAHVRRMDEIGSLIETTLRSHGEDHEQAITVLGCETDSAGRRYSRTLTLLEFLLTGHWQPVRVPAGPLDAYLGSSRILAGAEMMELRSPTCRRYAQFIDFKEYGTHTEPGMLNALLYEDYEYVITHSFSAVGKRQALAYLQRQRAQLANVQDAAYSQIDDLAHAEDALVNGDFVIGEYHFSMMILGADPRQLRRDVSSAMTRIQERGFLATPVTLALDAAFYAQLPANWAYRPRKAMLTSRNFAGLCSFHNFYGGKRDGNPWGPALSLLSTPSGQPFYFNFHHSGLDEDCRGQMMLGNTRIIGQSGSGKTVLLNFLLCQLQKFRSADADGLTTIFFDKDRGAEICIRALDGQYLRIRDGEPTGFNPLQLPCTDRNVMFLDSLLAMLARAHDSPLTSAQHATLATAVRTVLRMPASLRRMSTLLQNITQATSEQRELVRRLGRWCRDDGAGGTGMLWWVFDNPNDCLDFSRPGNYGIDGTAFLDNAETRTPISMYLLHRMNEAMDGRRFVYLMDEAWKWIDDPAFAEFAGDQQLTIRKKNGLGVFSTQMPSSLLGARVAASLVQQCATEIYLPNPRADRAEYLDGFKCTETEYQLIRSMAEDSHLFLVKQGRQAVVAQLDLSGMDDELAILSGNARNLRCFEQALALTRERDPNDWIAVFHRLRREASAGLR</sequence>
<proteinExistence type="inferred from homology"/>
<name>PTLC_BORBR</name>
<protein>
    <recommendedName>
        <fullName>Type IV secretion system protein PtlC homolog</fullName>
    </recommendedName>
</protein>